<comment type="function">
    <text evidence="1">Catalyzes the reversible transfer of the terminal phosphate group between ATP and AMP. Plays an important role in cellular energy homeostasis and in adenine nucleotide metabolism.</text>
</comment>
<comment type="catalytic activity">
    <reaction evidence="1">
        <text>AMP + ATP = 2 ADP</text>
        <dbReference type="Rhea" id="RHEA:12973"/>
        <dbReference type="ChEBI" id="CHEBI:30616"/>
        <dbReference type="ChEBI" id="CHEBI:456215"/>
        <dbReference type="ChEBI" id="CHEBI:456216"/>
        <dbReference type="EC" id="2.7.4.3"/>
    </reaction>
</comment>
<comment type="pathway">
    <text evidence="1">Purine metabolism; AMP biosynthesis via salvage pathway; AMP from ADP: step 1/1.</text>
</comment>
<comment type="subunit">
    <text evidence="1">Monomer.</text>
</comment>
<comment type="subcellular location">
    <subcellularLocation>
        <location evidence="1">Cytoplasm</location>
    </subcellularLocation>
</comment>
<comment type="domain">
    <text evidence="1">Consists of three domains, a large central CORE domain and two small peripheral domains, NMPbind and LID, which undergo movements during catalysis. The LID domain closes over the site of phosphoryl transfer upon ATP binding. Assembling and dissambling the active center during each catalytic cycle provides an effective means to prevent ATP hydrolysis.</text>
</comment>
<comment type="similarity">
    <text evidence="1">Belongs to the adenylate kinase family.</text>
</comment>
<proteinExistence type="inferred from homology"/>
<protein>
    <recommendedName>
        <fullName evidence="1">Adenylate kinase</fullName>
        <shortName evidence="1">AK</shortName>
        <ecNumber evidence="1">2.7.4.3</ecNumber>
    </recommendedName>
    <alternativeName>
        <fullName evidence="1">ATP-AMP transphosphorylase</fullName>
    </alternativeName>
    <alternativeName>
        <fullName evidence="1">ATP:AMP phosphotransferase</fullName>
    </alternativeName>
    <alternativeName>
        <fullName evidence="1">Adenylate monophosphate kinase</fullName>
    </alternativeName>
</protein>
<sequence>MNLLIMGLPGAGKGTQAAKIVEKFNVAHISTGDMFRAAMANQTEMGILAKSYIDKGDLVPDEVTNGIVKERLVQDDIKEKGFLLDGYPRTIEQAHALDENLADLGIELQGVINIEIDPSKLVERLSGRIIHKETGETFHKVFNPPVGDYKEEDFYQREDDKPESVKRRLEVNIAQGQPIIDHYRAKGLVHDIEGDQDIDLVFQAIDTVLSKLQ</sequence>
<name>KAD_STRSY</name>
<evidence type="ECO:0000255" key="1">
    <source>
        <dbReference type="HAMAP-Rule" id="MF_00235"/>
    </source>
</evidence>
<feature type="chain" id="PRO_1000021772" description="Adenylate kinase">
    <location>
        <begin position="1"/>
        <end position="213"/>
    </location>
</feature>
<feature type="region of interest" description="NMP" evidence="1">
    <location>
        <begin position="30"/>
        <end position="59"/>
    </location>
</feature>
<feature type="region of interest" description="LID" evidence="1">
    <location>
        <begin position="127"/>
        <end position="160"/>
    </location>
</feature>
<feature type="binding site" evidence="1">
    <location>
        <begin position="10"/>
        <end position="15"/>
    </location>
    <ligand>
        <name>ATP</name>
        <dbReference type="ChEBI" id="CHEBI:30616"/>
    </ligand>
</feature>
<feature type="binding site" evidence="1">
    <location>
        <position position="31"/>
    </location>
    <ligand>
        <name>AMP</name>
        <dbReference type="ChEBI" id="CHEBI:456215"/>
    </ligand>
</feature>
<feature type="binding site" evidence="1">
    <location>
        <position position="36"/>
    </location>
    <ligand>
        <name>AMP</name>
        <dbReference type="ChEBI" id="CHEBI:456215"/>
    </ligand>
</feature>
<feature type="binding site" evidence="1">
    <location>
        <begin position="57"/>
        <end position="59"/>
    </location>
    <ligand>
        <name>AMP</name>
        <dbReference type="ChEBI" id="CHEBI:456215"/>
    </ligand>
</feature>
<feature type="binding site" evidence="1">
    <location>
        <begin position="86"/>
        <end position="89"/>
    </location>
    <ligand>
        <name>AMP</name>
        <dbReference type="ChEBI" id="CHEBI:456215"/>
    </ligand>
</feature>
<feature type="binding site" evidence="1">
    <location>
        <position position="93"/>
    </location>
    <ligand>
        <name>AMP</name>
        <dbReference type="ChEBI" id="CHEBI:456215"/>
    </ligand>
</feature>
<feature type="binding site" evidence="1">
    <location>
        <position position="128"/>
    </location>
    <ligand>
        <name>ATP</name>
        <dbReference type="ChEBI" id="CHEBI:30616"/>
    </ligand>
</feature>
<feature type="binding site" evidence="1">
    <location>
        <begin position="137"/>
        <end position="138"/>
    </location>
    <ligand>
        <name>ATP</name>
        <dbReference type="ChEBI" id="CHEBI:30616"/>
    </ligand>
</feature>
<feature type="binding site" evidence="1">
    <location>
        <position position="157"/>
    </location>
    <ligand>
        <name>AMP</name>
        <dbReference type="ChEBI" id="CHEBI:456215"/>
    </ligand>
</feature>
<feature type="binding site" evidence="1">
    <location>
        <position position="168"/>
    </location>
    <ligand>
        <name>AMP</name>
        <dbReference type="ChEBI" id="CHEBI:456215"/>
    </ligand>
</feature>
<feature type="binding site" evidence="1">
    <location>
        <position position="196"/>
    </location>
    <ligand>
        <name>ATP</name>
        <dbReference type="ChEBI" id="CHEBI:30616"/>
    </ligand>
</feature>
<dbReference type="EC" id="2.7.4.3" evidence="1"/>
<dbReference type="EMBL" id="CP000407">
    <property type="protein sequence ID" value="ABP89063.1"/>
    <property type="molecule type" value="Genomic_DNA"/>
</dbReference>
<dbReference type="SMR" id="A4VSH4"/>
<dbReference type="STRING" id="391295.SSU05_0091"/>
<dbReference type="KEGG" id="ssu:SSU05_0091"/>
<dbReference type="eggNOG" id="COG0563">
    <property type="taxonomic scope" value="Bacteria"/>
</dbReference>
<dbReference type="HOGENOM" id="CLU_032354_1_2_9"/>
<dbReference type="UniPathway" id="UPA00588">
    <property type="reaction ID" value="UER00649"/>
</dbReference>
<dbReference type="GO" id="GO:0005737">
    <property type="term" value="C:cytoplasm"/>
    <property type="evidence" value="ECO:0007669"/>
    <property type="project" value="UniProtKB-SubCell"/>
</dbReference>
<dbReference type="GO" id="GO:0004017">
    <property type="term" value="F:adenylate kinase activity"/>
    <property type="evidence" value="ECO:0007669"/>
    <property type="project" value="UniProtKB-UniRule"/>
</dbReference>
<dbReference type="GO" id="GO:0005524">
    <property type="term" value="F:ATP binding"/>
    <property type="evidence" value="ECO:0007669"/>
    <property type="project" value="UniProtKB-UniRule"/>
</dbReference>
<dbReference type="GO" id="GO:0044209">
    <property type="term" value="P:AMP salvage"/>
    <property type="evidence" value="ECO:0007669"/>
    <property type="project" value="UniProtKB-UniRule"/>
</dbReference>
<dbReference type="CDD" id="cd01428">
    <property type="entry name" value="ADK"/>
    <property type="match status" value="1"/>
</dbReference>
<dbReference type="FunFam" id="3.40.50.300:FF:000106">
    <property type="entry name" value="Adenylate kinase mitochondrial"/>
    <property type="match status" value="1"/>
</dbReference>
<dbReference type="Gene3D" id="3.40.50.300">
    <property type="entry name" value="P-loop containing nucleotide triphosphate hydrolases"/>
    <property type="match status" value="1"/>
</dbReference>
<dbReference type="HAMAP" id="MF_00235">
    <property type="entry name" value="Adenylate_kinase_Adk"/>
    <property type="match status" value="1"/>
</dbReference>
<dbReference type="InterPro" id="IPR006259">
    <property type="entry name" value="Adenyl_kin_sub"/>
</dbReference>
<dbReference type="InterPro" id="IPR000850">
    <property type="entry name" value="Adenylat/UMP-CMP_kin"/>
</dbReference>
<dbReference type="InterPro" id="IPR033690">
    <property type="entry name" value="Adenylat_kinase_CS"/>
</dbReference>
<dbReference type="InterPro" id="IPR027417">
    <property type="entry name" value="P-loop_NTPase"/>
</dbReference>
<dbReference type="NCBIfam" id="TIGR01351">
    <property type="entry name" value="adk"/>
    <property type="match status" value="1"/>
</dbReference>
<dbReference type="NCBIfam" id="NF001380">
    <property type="entry name" value="PRK00279.1-2"/>
    <property type="match status" value="1"/>
</dbReference>
<dbReference type="NCBIfam" id="NF001381">
    <property type="entry name" value="PRK00279.1-3"/>
    <property type="match status" value="1"/>
</dbReference>
<dbReference type="NCBIfam" id="NF001382">
    <property type="entry name" value="PRK00279.1-4"/>
    <property type="match status" value="1"/>
</dbReference>
<dbReference type="NCBIfam" id="NF011100">
    <property type="entry name" value="PRK14527.1"/>
    <property type="match status" value="1"/>
</dbReference>
<dbReference type="PANTHER" id="PTHR23359">
    <property type="entry name" value="NUCLEOTIDE KINASE"/>
    <property type="match status" value="1"/>
</dbReference>
<dbReference type="Pfam" id="PF00406">
    <property type="entry name" value="ADK"/>
    <property type="match status" value="1"/>
</dbReference>
<dbReference type="PRINTS" id="PR00094">
    <property type="entry name" value="ADENYLTKNASE"/>
</dbReference>
<dbReference type="SUPFAM" id="SSF52540">
    <property type="entry name" value="P-loop containing nucleoside triphosphate hydrolases"/>
    <property type="match status" value="1"/>
</dbReference>
<dbReference type="PROSITE" id="PS00113">
    <property type="entry name" value="ADENYLATE_KINASE"/>
    <property type="match status" value="1"/>
</dbReference>
<accession>A4VSH4</accession>
<organism>
    <name type="scientific">Streptococcus suis (strain 05ZYH33)</name>
    <dbReference type="NCBI Taxonomy" id="391295"/>
    <lineage>
        <taxon>Bacteria</taxon>
        <taxon>Bacillati</taxon>
        <taxon>Bacillota</taxon>
        <taxon>Bacilli</taxon>
        <taxon>Lactobacillales</taxon>
        <taxon>Streptococcaceae</taxon>
        <taxon>Streptococcus</taxon>
    </lineage>
</organism>
<keyword id="KW-0067">ATP-binding</keyword>
<keyword id="KW-0963">Cytoplasm</keyword>
<keyword id="KW-0418">Kinase</keyword>
<keyword id="KW-0545">Nucleotide biosynthesis</keyword>
<keyword id="KW-0547">Nucleotide-binding</keyword>
<keyword id="KW-0808">Transferase</keyword>
<gene>
    <name evidence="1" type="primary">adk</name>
    <name type="ordered locus">SSU05_0091</name>
</gene>
<reference key="1">
    <citation type="journal article" date="2007" name="PLoS ONE">
        <title>A glimpse of streptococcal toxic shock syndrome from comparative genomics of S. suis 2 Chinese isolates.</title>
        <authorList>
            <person name="Chen C."/>
            <person name="Tang J."/>
            <person name="Dong W."/>
            <person name="Wang C."/>
            <person name="Feng Y."/>
            <person name="Wang J."/>
            <person name="Zheng F."/>
            <person name="Pan X."/>
            <person name="Liu D."/>
            <person name="Li M."/>
            <person name="Song Y."/>
            <person name="Zhu X."/>
            <person name="Sun H."/>
            <person name="Feng T."/>
            <person name="Guo Z."/>
            <person name="Ju A."/>
            <person name="Ge J."/>
            <person name="Dong Y."/>
            <person name="Sun W."/>
            <person name="Jiang Y."/>
            <person name="Wang J."/>
            <person name="Yan J."/>
            <person name="Yang H."/>
            <person name="Wang X."/>
            <person name="Gao G.F."/>
            <person name="Yang R."/>
            <person name="Wang J."/>
            <person name="Yu J."/>
        </authorList>
    </citation>
    <scope>NUCLEOTIDE SEQUENCE [LARGE SCALE GENOMIC DNA]</scope>
    <source>
        <strain>05ZYH33</strain>
    </source>
</reference>